<comment type="function">
    <text evidence="1">Involved in the regulation of the intracellular balance of NAD and NADP, and is a key enzyme in the biosynthesis of NADP. Catalyzes specifically the phosphorylation on 2'-hydroxyl of the adenosine moiety of NAD to yield NADP.</text>
</comment>
<comment type="catalytic activity">
    <reaction evidence="1">
        <text>NAD(+) + ATP = ADP + NADP(+) + H(+)</text>
        <dbReference type="Rhea" id="RHEA:18629"/>
        <dbReference type="ChEBI" id="CHEBI:15378"/>
        <dbReference type="ChEBI" id="CHEBI:30616"/>
        <dbReference type="ChEBI" id="CHEBI:57540"/>
        <dbReference type="ChEBI" id="CHEBI:58349"/>
        <dbReference type="ChEBI" id="CHEBI:456216"/>
        <dbReference type="EC" id="2.7.1.23"/>
    </reaction>
</comment>
<comment type="cofactor">
    <cofactor evidence="1">
        <name>a divalent metal cation</name>
        <dbReference type="ChEBI" id="CHEBI:60240"/>
    </cofactor>
</comment>
<comment type="subcellular location">
    <subcellularLocation>
        <location evidence="1">Cytoplasm</location>
    </subcellularLocation>
</comment>
<comment type="similarity">
    <text evidence="1">Belongs to the NAD kinase family.</text>
</comment>
<evidence type="ECO:0000255" key="1">
    <source>
        <dbReference type="HAMAP-Rule" id="MF_00361"/>
    </source>
</evidence>
<keyword id="KW-0067">ATP-binding</keyword>
<keyword id="KW-0963">Cytoplasm</keyword>
<keyword id="KW-0418">Kinase</keyword>
<keyword id="KW-0520">NAD</keyword>
<keyword id="KW-0521">NADP</keyword>
<keyword id="KW-0547">Nucleotide-binding</keyword>
<keyword id="KW-0808">Transferase</keyword>
<proteinExistence type="inferred from homology"/>
<sequence>MKVAFVIRKDCKRCATIAKSIIELIPPDWEKIYDTEAAKFLGGVGKDITEISADIIIAIGGDGTVLRILQNAKGPVLGINMGGLGFLTEIEIDEVGSSTYKLIRGEYKINEAMKLKVYINGRRLEDCTNEAVVHTDRIARIRQFKIYVDGHFLTTIKSDGVIVATPTGSSSYSSSAGGPLLLPTVRGMVISYLAPYSSRIKPVVVPSESTVEIKIAGNDQDSLLILDGQKEYKIKSGDTVSISMSEEKARFVSFRESIYDRLRDKVIKHVVN</sequence>
<accession>Q979U7</accession>
<dbReference type="EC" id="2.7.1.23" evidence="1"/>
<dbReference type="EMBL" id="BA000011">
    <property type="protein sequence ID" value="BAB60205.1"/>
    <property type="molecule type" value="Genomic_DNA"/>
</dbReference>
<dbReference type="RefSeq" id="WP_010917292.1">
    <property type="nucleotide sequence ID" value="NC_002689.2"/>
</dbReference>
<dbReference type="SMR" id="Q979U7"/>
<dbReference type="STRING" id="273116.gene:9381857"/>
<dbReference type="PaxDb" id="273116-14325301"/>
<dbReference type="GeneID" id="1441174"/>
<dbReference type="KEGG" id="tvo:TVG1088770"/>
<dbReference type="eggNOG" id="arCOG01348">
    <property type="taxonomic scope" value="Archaea"/>
</dbReference>
<dbReference type="HOGENOM" id="CLU_008831_0_0_2"/>
<dbReference type="OrthoDB" id="77798at2157"/>
<dbReference type="PhylomeDB" id="Q979U7"/>
<dbReference type="Proteomes" id="UP000001017">
    <property type="component" value="Chromosome"/>
</dbReference>
<dbReference type="GO" id="GO:0005737">
    <property type="term" value="C:cytoplasm"/>
    <property type="evidence" value="ECO:0007669"/>
    <property type="project" value="UniProtKB-SubCell"/>
</dbReference>
<dbReference type="GO" id="GO:0005524">
    <property type="term" value="F:ATP binding"/>
    <property type="evidence" value="ECO:0007669"/>
    <property type="project" value="UniProtKB-KW"/>
</dbReference>
<dbReference type="GO" id="GO:0046872">
    <property type="term" value="F:metal ion binding"/>
    <property type="evidence" value="ECO:0007669"/>
    <property type="project" value="UniProtKB-UniRule"/>
</dbReference>
<dbReference type="GO" id="GO:0003951">
    <property type="term" value="F:NAD+ kinase activity"/>
    <property type="evidence" value="ECO:0007669"/>
    <property type="project" value="UniProtKB-UniRule"/>
</dbReference>
<dbReference type="GO" id="GO:0019674">
    <property type="term" value="P:NAD metabolic process"/>
    <property type="evidence" value="ECO:0007669"/>
    <property type="project" value="InterPro"/>
</dbReference>
<dbReference type="GO" id="GO:0006741">
    <property type="term" value="P:NADP biosynthetic process"/>
    <property type="evidence" value="ECO:0007669"/>
    <property type="project" value="UniProtKB-UniRule"/>
</dbReference>
<dbReference type="Gene3D" id="3.40.50.10330">
    <property type="entry name" value="Probable inorganic polyphosphate/atp-NAD kinase, domain 1"/>
    <property type="match status" value="1"/>
</dbReference>
<dbReference type="Gene3D" id="2.60.200.30">
    <property type="entry name" value="Probable inorganic polyphosphate/atp-NAD kinase, domain 2"/>
    <property type="match status" value="1"/>
</dbReference>
<dbReference type="HAMAP" id="MF_00361">
    <property type="entry name" value="NAD_kinase"/>
    <property type="match status" value="1"/>
</dbReference>
<dbReference type="InterPro" id="IPR017438">
    <property type="entry name" value="ATP-NAD_kinase_N"/>
</dbReference>
<dbReference type="InterPro" id="IPR017437">
    <property type="entry name" value="ATP-NAD_kinase_PpnK-typ_C"/>
</dbReference>
<dbReference type="InterPro" id="IPR016064">
    <property type="entry name" value="NAD/diacylglycerol_kinase_sf"/>
</dbReference>
<dbReference type="InterPro" id="IPR002504">
    <property type="entry name" value="NADK"/>
</dbReference>
<dbReference type="NCBIfam" id="NF002255">
    <property type="entry name" value="PRK01185.1"/>
    <property type="match status" value="1"/>
</dbReference>
<dbReference type="PANTHER" id="PTHR20275">
    <property type="entry name" value="NAD KINASE"/>
    <property type="match status" value="1"/>
</dbReference>
<dbReference type="PANTHER" id="PTHR20275:SF0">
    <property type="entry name" value="NAD KINASE"/>
    <property type="match status" value="1"/>
</dbReference>
<dbReference type="Pfam" id="PF01513">
    <property type="entry name" value="NAD_kinase"/>
    <property type="match status" value="1"/>
</dbReference>
<dbReference type="Pfam" id="PF20143">
    <property type="entry name" value="NAD_kinase_C"/>
    <property type="match status" value="1"/>
</dbReference>
<dbReference type="SUPFAM" id="SSF111331">
    <property type="entry name" value="NAD kinase/diacylglycerol kinase-like"/>
    <property type="match status" value="1"/>
</dbReference>
<protein>
    <recommendedName>
        <fullName evidence="1">NAD kinase</fullName>
        <ecNumber evidence="1">2.7.1.23</ecNumber>
    </recommendedName>
    <alternativeName>
        <fullName evidence="1">ATP-dependent NAD kinase</fullName>
    </alternativeName>
</protein>
<gene>
    <name evidence="1" type="primary">nadK</name>
    <name type="ordered locus">TV1063</name>
    <name type="ORF">TVG1088770</name>
</gene>
<reference key="1">
    <citation type="journal article" date="2000" name="Proc. Natl. Acad. Sci. U.S.A.">
        <title>Archaeal adaptation to higher temperatures revealed by genomic sequence of Thermoplasma volcanium.</title>
        <authorList>
            <person name="Kawashima T."/>
            <person name="Amano N."/>
            <person name="Koike H."/>
            <person name="Makino S."/>
            <person name="Higuchi S."/>
            <person name="Kawashima-Ohya Y."/>
            <person name="Watanabe K."/>
            <person name="Yamazaki M."/>
            <person name="Kanehori K."/>
            <person name="Kawamoto T."/>
            <person name="Nunoshiba T."/>
            <person name="Yamamoto Y."/>
            <person name="Aramaki H."/>
            <person name="Makino K."/>
            <person name="Suzuki M."/>
        </authorList>
    </citation>
    <scope>NUCLEOTIDE SEQUENCE [LARGE SCALE GENOMIC DNA]</scope>
    <source>
        <strain>ATCC 51530 / DSM 4299 / JCM 9571 / NBRC 15438 / GSS1</strain>
    </source>
</reference>
<feature type="chain" id="PRO_0000120712" description="NAD kinase">
    <location>
        <begin position="1"/>
        <end position="272"/>
    </location>
</feature>
<feature type="active site" description="Proton acceptor" evidence="1">
    <location>
        <position position="62"/>
    </location>
</feature>
<feature type="binding site" evidence="1">
    <location>
        <begin position="62"/>
        <end position="63"/>
    </location>
    <ligand>
        <name>NAD(+)</name>
        <dbReference type="ChEBI" id="CHEBI:57540"/>
    </ligand>
</feature>
<feature type="binding site" evidence="1">
    <location>
        <position position="67"/>
    </location>
    <ligand>
        <name>NAD(+)</name>
        <dbReference type="ChEBI" id="CHEBI:57540"/>
    </ligand>
</feature>
<feature type="binding site" evidence="1">
    <location>
        <begin position="129"/>
        <end position="130"/>
    </location>
    <ligand>
        <name>NAD(+)</name>
        <dbReference type="ChEBI" id="CHEBI:57540"/>
    </ligand>
</feature>
<feature type="binding site" evidence="1">
    <location>
        <position position="140"/>
    </location>
    <ligand>
        <name>NAD(+)</name>
        <dbReference type="ChEBI" id="CHEBI:57540"/>
    </ligand>
</feature>
<feature type="binding site" evidence="1">
    <location>
        <position position="157"/>
    </location>
    <ligand>
        <name>NAD(+)</name>
        <dbReference type="ChEBI" id="CHEBI:57540"/>
    </ligand>
</feature>
<feature type="binding site" evidence="1">
    <location>
        <position position="159"/>
    </location>
    <ligand>
        <name>NAD(+)</name>
        <dbReference type="ChEBI" id="CHEBI:57540"/>
    </ligand>
</feature>
<feature type="binding site" evidence="1">
    <location>
        <begin position="170"/>
        <end position="175"/>
    </location>
    <ligand>
        <name>NAD(+)</name>
        <dbReference type="ChEBI" id="CHEBI:57540"/>
    </ligand>
</feature>
<feature type="binding site" evidence="1">
    <location>
        <position position="194"/>
    </location>
    <ligand>
        <name>NAD(+)</name>
        <dbReference type="ChEBI" id="CHEBI:57540"/>
    </ligand>
</feature>
<feature type="binding site" evidence="1">
    <location>
        <position position="229"/>
    </location>
    <ligand>
        <name>NAD(+)</name>
        <dbReference type="ChEBI" id="CHEBI:57540"/>
    </ligand>
</feature>
<name>NADK_THEVO</name>
<organism>
    <name type="scientific">Thermoplasma volcanium (strain ATCC 51530 / DSM 4299 / JCM 9571 / NBRC 15438 / GSS1)</name>
    <dbReference type="NCBI Taxonomy" id="273116"/>
    <lineage>
        <taxon>Archaea</taxon>
        <taxon>Methanobacteriati</taxon>
        <taxon>Thermoplasmatota</taxon>
        <taxon>Thermoplasmata</taxon>
        <taxon>Thermoplasmatales</taxon>
        <taxon>Thermoplasmataceae</taxon>
        <taxon>Thermoplasma</taxon>
    </lineage>
</organism>